<accession>Q83QL4</accession>
<sequence length="345" mass="36873">MTDKTSLSYKDAGVDIDAGNALVGRIKGVVKKTRRPEVMGGLGGFGALCALPQKYREPVLVSGTDGVGTKLRLAMDLKRHDTIGIDLVAMCVNDLVVQGAEPLFFLDYYATGKLDVDTASAVISGIAEGCLQSGCSLVGGETAEMPGMYHGEDYDVAGFCVGVVEKSEIIDGSKVSDGDVLIALGSSGPHSNGYSLVRKILEVSGCDPQTTELDGKPLADHLLAPTRIYVKSVLELIEKVDVHAIAHLTGGGFWENIPRVLPDNTQAVIDESSWQWPEVFNWLQTAGNVERHEMYRTFNCGVGMIIALPAPEVDKALALLNANGENAWKIGIIKASDSEQRVVIE</sequence>
<evidence type="ECO:0000250" key="1"/>
<evidence type="ECO:0000255" key="2">
    <source>
        <dbReference type="HAMAP-Rule" id="MF_00741"/>
    </source>
</evidence>
<evidence type="ECO:0000305" key="3"/>
<organism>
    <name type="scientific">Shigella flexneri</name>
    <dbReference type="NCBI Taxonomy" id="623"/>
    <lineage>
        <taxon>Bacteria</taxon>
        <taxon>Pseudomonadati</taxon>
        <taxon>Pseudomonadota</taxon>
        <taxon>Gammaproteobacteria</taxon>
        <taxon>Enterobacterales</taxon>
        <taxon>Enterobacteriaceae</taxon>
        <taxon>Shigella</taxon>
    </lineage>
</organism>
<gene>
    <name evidence="2" type="primary">purM</name>
    <name type="ordered locus">SF2543</name>
    <name type="ordered locus">S2692</name>
</gene>
<reference key="1">
    <citation type="journal article" date="2002" name="Nucleic Acids Res.">
        <title>Genome sequence of Shigella flexneri 2a: insights into pathogenicity through comparison with genomes of Escherichia coli K12 and O157.</title>
        <authorList>
            <person name="Jin Q."/>
            <person name="Yuan Z."/>
            <person name="Xu J."/>
            <person name="Wang Y."/>
            <person name="Shen Y."/>
            <person name="Lu W."/>
            <person name="Wang J."/>
            <person name="Liu H."/>
            <person name="Yang J."/>
            <person name="Yang F."/>
            <person name="Zhang X."/>
            <person name="Zhang J."/>
            <person name="Yang G."/>
            <person name="Wu H."/>
            <person name="Qu D."/>
            <person name="Dong J."/>
            <person name="Sun L."/>
            <person name="Xue Y."/>
            <person name="Zhao A."/>
            <person name="Gao Y."/>
            <person name="Zhu J."/>
            <person name="Kan B."/>
            <person name="Ding K."/>
            <person name="Chen S."/>
            <person name="Cheng H."/>
            <person name="Yao Z."/>
            <person name="He B."/>
            <person name="Chen R."/>
            <person name="Ma D."/>
            <person name="Qiang B."/>
            <person name="Wen Y."/>
            <person name="Hou Y."/>
            <person name="Yu J."/>
        </authorList>
    </citation>
    <scope>NUCLEOTIDE SEQUENCE [LARGE SCALE GENOMIC DNA]</scope>
    <source>
        <strain>301 / Serotype 2a</strain>
    </source>
</reference>
<reference key="2">
    <citation type="journal article" date="2003" name="Infect. Immun.">
        <title>Complete genome sequence and comparative genomics of Shigella flexneri serotype 2a strain 2457T.</title>
        <authorList>
            <person name="Wei J."/>
            <person name="Goldberg M.B."/>
            <person name="Burland V."/>
            <person name="Venkatesan M.M."/>
            <person name="Deng W."/>
            <person name="Fournier G."/>
            <person name="Mayhew G.F."/>
            <person name="Plunkett G. III"/>
            <person name="Rose D.J."/>
            <person name="Darling A."/>
            <person name="Mau B."/>
            <person name="Perna N.T."/>
            <person name="Payne S.M."/>
            <person name="Runyen-Janecky L.J."/>
            <person name="Zhou S."/>
            <person name="Schwartz D.C."/>
            <person name="Blattner F.R."/>
        </authorList>
    </citation>
    <scope>NUCLEOTIDE SEQUENCE [LARGE SCALE GENOMIC DNA]</scope>
    <source>
        <strain>ATCC 700930 / 2457T / Serotype 2a</strain>
    </source>
</reference>
<name>PUR5_SHIFL</name>
<keyword id="KW-0067">ATP-binding</keyword>
<keyword id="KW-0963">Cytoplasm</keyword>
<keyword id="KW-0436">Ligase</keyword>
<keyword id="KW-0547">Nucleotide-binding</keyword>
<keyword id="KW-0658">Purine biosynthesis</keyword>
<keyword id="KW-1185">Reference proteome</keyword>
<feature type="initiator methionine" description="Removed" evidence="1">
    <location>
        <position position="1"/>
    </location>
</feature>
<feature type="chain" id="PRO_0000148244" description="Phosphoribosylformylglycinamidine cyclo-ligase">
    <location>
        <begin position="2"/>
        <end position="345"/>
    </location>
</feature>
<proteinExistence type="inferred from homology"/>
<dbReference type="EC" id="6.3.3.1" evidence="2"/>
<dbReference type="EMBL" id="AE005674">
    <property type="protein sequence ID" value="AAN44044.1"/>
    <property type="status" value="ALT_INIT"/>
    <property type="molecule type" value="Genomic_DNA"/>
</dbReference>
<dbReference type="EMBL" id="AE014073">
    <property type="protein sequence ID" value="AAP17854.1"/>
    <property type="status" value="ALT_INIT"/>
    <property type="molecule type" value="Genomic_DNA"/>
</dbReference>
<dbReference type="RefSeq" id="NP_708337.1">
    <property type="nucleotide sequence ID" value="NC_004337.2"/>
</dbReference>
<dbReference type="RefSeq" id="WP_001295474.1">
    <property type="nucleotide sequence ID" value="NZ_WPGV01000001.1"/>
</dbReference>
<dbReference type="SMR" id="Q83QL4"/>
<dbReference type="STRING" id="198214.SF2543"/>
<dbReference type="PaxDb" id="198214-SF2543"/>
<dbReference type="GeneID" id="1024382"/>
<dbReference type="GeneID" id="93774637"/>
<dbReference type="KEGG" id="sfl:SF2543"/>
<dbReference type="KEGG" id="sfx:S2692"/>
<dbReference type="PATRIC" id="fig|198214.7.peg.3039"/>
<dbReference type="HOGENOM" id="CLU_047116_0_0_6"/>
<dbReference type="UniPathway" id="UPA00074">
    <property type="reaction ID" value="UER00129"/>
</dbReference>
<dbReference type="Proteomes" id="UP000001006">
    <property type="component" value="Chromosome"/>
</dbReference>
<dbReference type="Proteomes" id="UP000002673">
    <property type="component" value="Chromosome"/>
</dbReference>
<dbReference type="GO" id="GO:0005829">
    <property type="term" value="C:cytosol"/>
    <property type="evidence" value="ECO:0007669"/>
    <property type="project" value="TreeGrafter"/>
</dbReference>
<dbReference type="GO" id="GO:0005524">
    <property type="term" value="F:ATP binding"/>
    <property type="evidence" value="ECO:0007669"/>
    <property type="project" value="UniProtKB-KW"/>
</dbReference>
<dbReference type="GO" id="GO:0004637">
    <property type="term" value="F:phosphoribosylamine-glycine ligase activity"/>
    <property type="evidence" value="ECO:0007669"/>
    <property type="project" value="TreeGrafter"/>
</dbReference>
<dbReference type="GO" id="GO:0004641">
    <property type="term" value="F:phosphoribosylformylglycinamidine cyclo-ligase activity"/>
    <property type="evidence" value="ECO:0007669"/>
    <property type="project" value="UniProtKB-UniRule"/>
</dbReference>
<dbReference type="GO" id="GO:0006189">
    <property type="term" value="P:'de novo' IMP biosynthetic process"/>
    <property type="evidence" value="ECO:0007669"/>
    <property type="project" value="UniProtKB-UniRule"/>
</dbReference>
<dbReference type="GO" id="GO:0046084">
    <property type="term" value="P:adenine biosynthetic process"/>
    <property type="evidence" value="ECO:0007669"/>
    <property type="project" value="TreeGrafter"/>
</dbReference>
<dbReference type="CDD" id="cd02196">
    <property type="entry name" value="PurM"/>
    <property type="match status" value="1"/>
</dbReference>
<dbReference type="FunFam" id="3.30.1330.10:FF:000001">
    <property type="entry name" value="Phosphoribosylformylglycinamidine cyclo-ligase"/>
    <property type="match status" value="1"/>
</dbReference>
<dbReference type="FunFam" id="3.90.650.10:FF:000001">
    <property type="entry name" value="Phosphoribosylformylglycinamidine cyclo-ligase"/>
    <property type="match status" value="1"/>
</dbReference>
<dbReference type="Gene3D" id="3.90.650.10">
    <property type="entry name" value="PurM-like C-terminal domain"/>
    <property type="match status" value="1"/>
</dbReference>
<dbReference type="Gene3D" id="3.30.1330.10">
    <property type="entry name" value="PurM-like, N-terminal domain"/>
    <property type="match status" value="1"/>
</dbReference>
<dbReference type="HAMAP" id="MF_00741">
    <property type="entry name" value="AIRS"/>
    <property type="match status" value="1"/>
</dbReference>
<dbReference type="InterPro" id="IPR010918">
    <property type="entry name" value="PurM-like_C_dom"/>
</dbReference>
<dbReference type="InterPro" id="IPR036676">
    <property type="entry name" value="PurM-like_C_sf"/>
</dbReference>
<dbReference type="InterPro" id="IPR016188">
    <property type="entry name" value="PurM-like_N"/>
</dbReference>
<dbReference type="InterPro" id="IPR036921">
    <property type="entry name" value="PurM-like_N_sf"/>
</dbReference>
<dbReference type="InterPro" id="IPR004733">
    <property type="entry name" value="PurM_cligase"/>
</dbReference>
<dbReference type="NCBIfam" id="TIGR00878">
    <property type="entry name" value="purM"/>
    <property type="match status" value="1"/>
</dbReference>
<dbReference type="PANTHER" id="PTHR10520:SF12">
    <property type="entry name" value="TRIFUNCTIONAL PURINE BIOSYNTHETIC PROTEIN ADENOSINE-3"/>
    <property type="match status" value="1"/>
</dbReference>
<dbReference type="PANTHER" id="PTHR10520">
    <property type="entry name" value="TRIFUNCTIONAL PURINE BIOSYNTHETIC PROTEIN ADENOSINE-3-RELATED"/>
    <property type="match status" value="1"/>
</dbReference>
<dbReference type="Pfam" id="PF00586">
    <property type="entry name" value="AIRS"/>
    <property type="match status" value="1"/>
</dbReference>
<dbReference type="Pfam" id="PF02769">
    <property type="entry name" value="AIRS_C"/>
    <property type="match status" value="1"/>
</dbReference>
<dbReference type="SUPFAM" id="SSF56042">
    <property type="entry name" value="PurM C-terminal domain-like"/>
    <property type="match status" value="1"/>
</dbReference>
<dbReference type="SUPFAM" id="SSF55326">
    <property type="entry name" value="PurM N-terminal domain-like"/>
    <property type="match status" value="1"/>
</dbReference>
<protein>
    <recommendedName>
        <fullName evidence="2">Phosphoribosylformylglycinamidine cyclo-ligase</fullName>
        <ecNumber evidence="2">6.3.3.1</ecNumber>
    </recommendedName>
    <alternativeName>
        <fullName evidence="2">AIR synthase</fullName>
    </alternativeName>
    <alternativeName>
        <fullName evidence="2">AIRS</fullName>
    </alternativeName>
    <alternativeName>
        <fullName evidence="2">Phosphoribosyl-aminoimidazole synthetase</fullName>
    </alternativeName>
</protein>
<comment type="catalytic activity">
    <reaction evidence="2">
        <text>2-formamido-N(1)-(5-O-phospho-beta-D-ribosyl)acetamidine + ATP = 5-amino-1-(5-phospho-beta-D-ribosyl)imidazole + ADP + phosphate + H(+)</text>
        <dbReference type="Rhea" id="RHEA:23032"/>
        <dbReference type="ChEBI" id="CHEBI:15378"/>
        <dbReference type="ChEBI" id="CHEBI:30616"/>
        <dbReference type="ChEBI" id="CHEBI:43474"/>
        <dbReference type="ChEBI" id="CHEBI:137981"/>
        <dbReference type="ChEBI" id="CHEBI:147287"/>
        <dbReference type="ChEBI" id="CHEBI:456216"/>
        <dbReference type="EC" id="6.3.3.1"/>
    </reaction>
</comment>
<comment type="pathway">
    <text evidence="2">Purine metabolism; IMP biosynthesis via de novo pathway; 5-amino-1-(5-phospho-D-ribosyl)imidazole from N(2)-formyl-N(1)-(5-phospho-D-ribosyl)glycinamide: step 2/2.</text>
</comment>
<comment type="subunit">
    <text evidence="1">Homodimer.</text>
</comment>
<comment type="subcellular location">
    <subcellularLocation>
        <location evidence="2">Cytoplasm</location>
    </subcellularLocation>
</comment>
<comment type="similarity">
    <text evidence="2">Belongs to the AIR synthase family.</text>
</comment>
<comment type="sequence caution" evidence="3">
    <conflict type="erroneous initiation">
        <sequence resource="EMBL-CDS" id="AAN44044"/>
    </conflict>
</comment>
<comment type="sequence caution" evidence="3">
    <conflict type="erroneous initiation">
        <sequence resource="EMBL-CDS" id="AAP17854"/>
    </conflict>
</comment>